<name>ARLY_NITV9</name>
<feature type="chain" id="PRO_1000116203" description="Argininosuccinate lyase">
    <location>
        <begin position="1"/>
        <end position="460"/>
    </location>
</feature>
<reference key="1">
    <citation type="submission" date="2008-10" db="EMBL/GenBank/DDBJ databases">
        <title>Complete sequence of Desulfovibrio vulgaris str. 'Miyazaki F'.</title>
        <authorList>
            <person name="Lucas S."/>
            <person name="Copeland A."/>
            <person name="Lapidus A."/>
            <person name="Glavina del Rio T."/>
            <person name="Dalin E."/>
            <person name="Tice H."/>
            <person name="Bruce D."/>
            <person name="Goodwin L."/>
            <person name="Pitluck S."/>
            <person name="Sims D."/>
            <person name="Brettin T."/>
            <person name="Detter J.C."/>
            <person name="Han C."/>
            <person name="Larimer F."/>
            <person name="Land M."/>
            <person name="Hauser L."/>
            <person name="Kyrpides N."/>
            <person name="Mikhailova N."/>
            <person name="Hazen T.C."/>
            <person name="Richardson P."/>
        </authorList>
    </citation>
    <scope>NUCLEOTIDE SEQUENCE [LARGE SCALE GENOMIC DNA]</scope>
    <source>
        <strain>DSM 19637 / Miyazaki F</strain>
    </source>
</reference>
<comment type="catalytic activity">
    <reaction evidence="1">
        <text>2-(N(omega)-L-arginino)succinate = fumarate + L-arginine</text>
        <dbReference type="Rhea" id="RHEA:24020"/>
        <dbReference type="ChEBI" id="CHEBI:29806"/>
        <dbReference type="ChEBI" id="CHEBI:32682"/>
        <dbReference type="ChEBI" id="CHEBI:57472"/>
        <dbReference type="EC" id="4.3.2.1"/>
    </reaction>
</comment>
<comment type="pathway">
    <text evidence="1">Amino-acid biosynthesis; L-arginine biosynthesis; L-arginine from L-ornithine and carbamoyl phosphate: step 3/3.</text>
</comment>
<comment type="subcellular location">
    <subcellularLocation>
        <location evidence="1">Cytoplasm</location>
    </subcellularLocation>
</comment>
<comment type="similarity">
    <text evidence="1">Belongs to the lyase 1 family. Argininosuccinate lyase subfamily.</text>
</comment>
<protein>
    <recommendedName>
        <fullName evidence="1">Argininosuccinate lyase</fullName>
        <shortName evidence="1">ASAL</shortName>
        <ecNumber evidence="1">4.3.2.1</ecNumber>
    </recommendedName>
    <alternativeName>
        <fullName evidence="1">Arginosuccinase</fullName>
    </alternativeName>
</protein>
<organism>
    <name type="scientific">Nitratidesulfovibrio vulgaris (strain DSM 19637 / Miyazaki F)</name>
    <name type="common">Desulfovibrio vulgaris</name>
    <dbReference type="NCBI Taxonomy" id="883"/>
    <lineage>
        <taxon>Bacteria</taxon>
        <taxon>Pseudomonadati</taxon>
        <taxon>Thermodesulfobacteriota</taxon>
        <taxon>Desulfovibrionia</taxon>
        <taxon>Desulfovibrionales</taxon>
        <taxon>Desulfovibrionaceae</taxon>
        <taxon>Nitratidesulfovibrio</taxon>
    </lineage>
</organism>
<evidence type="ECO:0000255" key="1">
    <source>
        <dbReference type="HAMAP-Rule" id="MF_00006"/>
    </source>
</evidence>
<dbReference type="EC" id="4.3.2.1" evidence="1"/>
<dbReference type="EMBL" id="CP001197">
    <property type="protein sequence ID" value="ACL07009.1"/>
    <property type="molecule type" value="Genomic_DNA"/>
</dbReference>
<dbReference type="SMR" id="B8DN65"/>
<dbReference type="STRING" id="883.DvMF_0048"/>
<dbReference type="KEGG" id="dvm:DvMF_0048"/>
<dbReference type="eggNOG" id="COG0165">
    <property type="taxonomic scope" value="Bacteria"/>
</dbReference>
<dbReference type="HOGENOM" id="CLU_027272_2_3_7"/>
<dbReference type="OrthoDB" id="9769623at2"/>
<dbReference type="UniPathway" id="UPA00068">
    <property type="reaction ID" value="UER00114"/>
</dbReference>
<dbReference type="GO" id="GO:0005829">
    <property type="term" value="C:cytosol"/>
    <property type="evidence" value="ECO:0007669"/>
    <property type="project" value="TreeGrafter"/>
</dbReference>
<dbReference type="GO" id="GO:0004056">
    <property type="term" value="F:argininosuccinate lyase activity"/>
    <property type="evidence" value="ECO:0007669"/>
    <property type="project" value="UniProtKB-UniRule"/>
</dbReference>
<dbReference type="GO" id="GO:0042450">
    <property type="term" value="P:arginine biosynthetic process via ornithine"/>
    <property type="evidence" value="ECO:0007669"/>
    <property type="project" value="InterPro"/>
</dbReference>
<dbReference type="GO" id="GO:0006526">
    <property type="term" value="P:L-arginine biosynthetic process"/>
    <property type="evidence" value="ECO:0007669"/>
    <property type="project" value="UniProtKB-UniRule"/>
</dbReference>
<dbReference type="CDD" id="cd01359">
    <property type="entry name" value="Argininosuccinate_lyase"/>
    <property type="match status" value="1"/>
</dbReference>
<dbReference type="FunFam" id="1.10.275.10:FF:000002">
    <property type="entry name" value="Argininosuccinate lyase"/>
    <property type="match status" value="1"/>
</dbReference>
<dbReference type="FunFam" id="1.10.40.30:FF:000001">
    <property type="entry name" value="Argininosuccinate lyase"/>
    <property type="match status" value="1"/>
</dbReference>
<dbReference type="FunFam" id="1.20.200.10:FF:000015">
    <property type="entry name" value="argininosuccinate lyase isoform X2"/>
    <property type="match status" value="1"/>
</dbReference>
<dbReference type="Gene3D" id="1.10.40.30">
    <property type="entry name" value="Fumarase/aspartase (C-terminal domain)"/>
    <property type="match status" value="1"/>
</dbReference>
<dbReference type="Gene3D" id="1.20.200.10">
    <property type="entry name" value="Fumarase/aspartase (Central domain)"/>
    <property type="match status" value="1"/>
</dbReference>
<dbReference type="Gene3D" id="1.10.275.10">
    <property type="entry name" value="Fumarase/aspartase (N-terminal domain)"/>
    <property type="match status" value="1"/>
</dbReference>
<dbReference type="HAMAP" id="MF_00006">
    <property type="entry name" value="Arg_succ_lyase"/>
    <property type="match status" value="1"/>
</dbReference>
<dbReference type="InterPro" id="IPR029419">
    <property type="entry name" value="Arg_succ_lyase_C"/>
</dbReference>
<dbReference type="InterPro" id="IPR009049">
    <property type="entry name" value="Argininosuccinate_lyase"/>
</dbReference>
<dbReference type="InterPro" id="IPR024083">
    <property type="entry name" value="Fumarase/histidase_N"/>
</dbReference>
<dbReference type="InterPro" id="IPR020557">
    <property type="entry name" value="Fumarate_lyase_CS"/>
</dbReference>
<dbReference type="InterPro" id="IPR000362">
    <property type="entry name" value="Fumarate_lyase_fam"/>
</dbReference>
<dbReference type="InterPro" id="IPR022761">
    <property type="entry name" value="Fumarate_lyase_N"/>
</dbReference>
<dbReference type="InterPro" id="IPR008948">
    <property type="entry name" value="L-Aspartase-like"/>
</dbReference>
<dbReference type="NCBIfam" id="TIGR00838">
    <property type="entry name" value="argH"/>
    <property type="match status" value="1"/>
</dbReference>
<dbReference type="PANTHER" id="PTHR43814">
    <property type="entry name" value="ARGININOSUCCINATE LYASE"/>
    <property type="match status" value="1"/>
</dbReference>
<dbReference type="PANTHER" id="PTHR43814:SF1">
    <property type="entry name" value="ARGININOSUCCINATE LYASE"/>
    <property type="match status" value="1"/>
</dbReference>
<dbReference type="Pfam" id="PF14698">
    <property type="entry name" value="ASL_C2"/>
    <property type="match status" value="1"/>
</dbReference>
<dbReference type="Pfam" id="PF00206">
    <property type="entry name" value="Lyase_1"/>
    <property type="match status" value="1"/>
</dbReference>
<dbReference type="PRINTS" id="PR00145">
    <property type="entry name" value="ARGSUCLYASE"/>
</dbReference>
<dbReference type="PRINTS" id="PR00149">
    <property type="entry name" value="FUMRATELYASE"/>
</dbReference>
<dbReference type="SUPFAM" id="SSF48557">
    <property type="entry name" value="L-aspartase-like"/>
    <property type="match status" value="1"/>
</dbReference>
<dbReference type="PROSITE" id="PS00163">
    <property type="entry name" value="FUMARATE_LYASES"/>
    <property type="match status" value="1"/>
</dbReference>
<keyword id="KW-0028">Amino-acid biosynthesis</keyword>
<keyword id="KW-0055">Arginine biosynthesis</keyword>
<keyword id="KW-0963">Cytoplasm</keyword>
<keyword id="KW-0456">Lyase</keyword>
<sequence>MAEKKMWGGRFRQATAALVEEYTQSVSFDRALYAQDIAGSKAHARMLAKQGVLTADEAARIVEGLDMVLAEIEGGTFVWRRELEDVHMNIESRLTELVGDVGKKLHTGRSRNDQVALDFRLFVSDRIRAWRGLARDLVAVLAERAGEHANTLLPGCTHMQPAQPVSLGHHLLAYAWMLRRDAERLADCDRRTRVCPLGAAALAGTTYPLDPAYVAEQLDMYGTFRNSMDAVSDRDFVLESLFCGATIMAHLSRLCEEIIIWANPAFGFVRLPDAYATGSSIMPQKKNPDVAEIMRGKTGRVYGALTAMLTTVKGLPMTYNRDMQEDKEPFLDCDRTVSASLEIMAGMLRELGFNEGRMRAALRAGFLNATELADYLVGKGIPFREAHHLTGAAVALAEERAITLEELPLADLQAICDRIGDDVYAVLDPAAAVARREMPGGTGPASVAAQLAELSGWLEE</sequence>
<accession>B8DN65</accession>
<proteinExistence type="inferred from homology"/>
<gene>
    <name evidence="1" type="primary">argH</name>
    <name type="ordered locus">DvMF_0048</name>
</gene>